<comment type="function">
    <text evidence="1">Bifunctional enzyme with both catalase and broad-spectrum peroxidase activity.</text>
</comment>
<comment type="catalytic activity">
    <reaction evidence="1">
        <text>H2O2 + AH2 = A + 2 H2O</text>
        <dbReference type="Rhea" id="RHEA:30275"/>
        <dbReference type="ChEBI" id="CHEBI:13193"/>
        <dbReference type="ChEBI" id="CHEBI:15377"/>
        <dbReference type="ChEBI" id="CHEBI:16240"/>
        <dbReference type="ChEBI" id="CHEBI:17499"/>
        <dbReference type="EC" id="1.11.1.21"/>
    </reaction>
</comment>
<comment type="catalytic activity">
    <reaction evidence="1">
        <text>2 H2O2 = O2 + 2 H2O</text>
        <dbReference type="Rhea" id="RHEA:20309"/>
        <dbReference type="ChEBI" id="CHEBI:15377"/>
        <dbReference type="ChEBI" id="CHEBI:15379"/>
        <dbReference type="ChEBI" id="CHEBI:16240"/>
        <dbReference type="EC" id="1.11.1.21"/>
    </reaction>
</comment>
<comment type="cofactor">
    <cofactor evidence="1">
        <name>heme b</name>
        <dbReference type="ChEBI" id="CHEBI:60344"/>
    </cofactor>
    <text evidence="1">Binds 1 heme b (iron(II)-protoporphyrin IX) group per dimer.</text>
</comment>
<comment type="subunit">
    <text evidence="1">Homodimer or homotetramer.</text>
</comment>
<comment type="PTM">
    <text evidence="1">Formation of the three residue Trp-Tyr-Met cross-link is important for the catalase, but not the peroxidase activity of the enzyme.</text>
</comment>
<comment type="similarity">
    <text evidence="1">Belongs to the peroxidase family. Peroxidase/catalase subfamily.</text>
</comment>
<feature type="chain" id="PRO_0000354904" description="Catalase-peroxidase">
    <location>
        <begin position="1"/>
        <end position="726"/>
    </location>
</feature>
<feature type="region of interest" description="Disordered" evidence="2">
    <location>
        <begin position="1"/>
        <end position="33"/>
    </location>
</feature>
<feature type="active site" description="Proton acceptor" evidence="1">
    <location>
        <position position="106"/>
    </location>
</feature>
<feature type="binding site" description="axial binding residue" evidence="1">
    <location>
        <position position="267"/>
    </location>
    <ligand>
        <name>heme b</name>
        <dbReference type="ChEBI" id="CHEBI:60344"/>
    </ligand>
    <ligandPart>
        <name>Fe</name>
        <dbReference type="ChEBI" id="CHEBI:18248"/>
    </ligandPart>
</feature>
<feature type="site" description="Transition state stabilizer" evidence="1">
    <location>
        <position position="102"/>
    </location>
</feature>
<feature type="cross-link" description="Tryptophyl-tyrosyl-methioninium (Trp-Tyr) (with M-252)" evidence="1">
    <location>
        <begin position="105"/>
        <end position="226"/>
    </location>
</feature>
<feature type="cross-link" description="Tryptophyl-tyrosyl-methioninium (Tyr-Met) (with W-105)" evidence="1">
    <location>
        <begin position="226"/>
        <end position="252"/>
    </location>
</feature>
<evidence type="ECO:0000255" key="1">
    <source>
        <dbReference type="HAMAP-Rule" id="MF_01961"/>
    </source>
</evidence>
<evidence type="ECO:0000256" key="2">
    <source>
        <dbReference type="SAM" id="MobiDB-lite"/>
    </source>
</evidence>
<proteinExistence type="inferred from homology"/>
<protein>
    <recommendedName>
        <fullName evidence="1">Catalase-peroxidase</fullName>
        <shortName evidence="1">CP</shortName>
        <ecNumber evidence="1">1.11.1.21</ecNumber>
    </recommendedName>
    <alternativeName>
        <fullName evidence="1">Peroxidase/catalase</fullName>
    </alternativeName>
</protein>
<name>KATG_SALAR</name>
<sequence>MSTTDDTHNTLSAGKCPFHQGGHDRSAGAGTASRDWWPNQLRVDLLNQHSNRSNPLGEDFDYRKEFSKLDYSALKGDLKALLTDSQPWWPADWGSYVGLFIRMAWHGAGTYRSIDGRGGAGRGQQRFAPLNSWPDNVSLDKARRLLWPIKQKYGQKISWADLFILAGNVALENSGFRTFGFGAGREDVWEPDLDVNWGDEKAWLTHRHPEALAKAPLGATEMGLIYVNPEGPDHSGEPLSAAAAIRATFGNMGMNDEETVALIAGGHTLGKTHGAAAASHVGADPEAAPIEAQGLGWASSYGSGVGADAITSGLEVVWTQTPTQWSNYFFENLFKYEWVQTRSPAGAIQFEAVDAPDIIPDPFDPSKKRKPTMLVTDLTLRFDPEFEKISRRFLNDPQAFNEAFARAWFKLTHRDMGPKARYIGPEVPKEDLIWQDPLPQPLYQPTQEDIINLKAAIAASGLSVSEMVSVAWASASTFRGGDKRGGANGARLALAPQRDWDVNAVAARVLPVLEALQKTTNKASLADIIVLAGVVGIEQAAAAAGVSISVPFAPGRVDARQDQTDIEMFSLLEPIADGFRNYRARLDVSTTESLLIDKAQQLTLTAPEMTVLVGGMRVLGTNFDGSQNGVFTDRPGVLSTDFFANLLDMRYEWKPTDDANELFEGRDRLTGEVKYTATRADLVFGSNSVLRALAEVYACSDAHEKFVKDFVAAWVKVMNLDRFDLL</sequence>
<organism>
    <name type="scientific">Salmonella arizonae (strain ATCC BAA-731 / CDC346-86 / RSK2980)</name>
    <dbReference type="NCBI Taxonomy" id="41514"/>
    <lineage>
        <taxon>Bacteria</taxon>
        <taxon>Pseudomonadati</taxon>
        <taxon>Pseudomonadota</taxon>
        <taxon>Gammaproteobacteria</taxon>
        <taxon>Enterobacterales</taxon>
        <taxon>Enterobacteriaceae</taxon>
        <taxon>Salmonella</taxon>
    </lineage>
</organism>
<keyword id="KW-0349">Heme</keyword>
<keyword id="KW-0376">Hydrogen peroxide</keyword>
<keyword id="KW-0408">Iron</keyword>
<keyword id="KW-0479">Metal-binding</keyword>
<keyword id="KW-0560">Oxidoreductase</keyword>
<keyword id="KW-0575">Peroxidase</keyword>
<keyword id="KW-1185">Reference proteome</keyword>
<dbReference type="EC" id="1.11.1.21" evidence="1"/>
<dbReference type="EMBL" id="CP000880">
    <property type="protein sequence ID" value="ABX23365.1"/>
    <property type="molecule type" value="Genomic_DNA"/>
</dbReference>
<dbReference type="SMR" id="A9MI19"/>
<dbReference type="STRING" id="41514.SARI_03550"/>
<dbReference type="KEGG" id="ses:SARI_03550"/>
<dbReference type="HOGENOM" id="CLU_025424_2_0_6"/>
<dbReference type="Proteomes" id="UP000002084">
    <property type="component" value="Chromosome"/>
</dbReference>
<dbReference type="GO" id="GO:0005829">
    <property type="term" value="C:cytosol"/>
    <property type="evidence" value="ECO:0007669"/>
    <property type="project" value="TreeGrafter"/>
</dbReference>
<dbReference type="GO" id="GO:0004096">
    <property type="term" value="F:catalase activity"/>
    <property type="evidence" value="ECO:0007669"/>
    <property type="project" value="UniProtKB-UniRule"/>
</dbReference>
<dbReference type="GO" id="GO:0020037">
    <property type="term" value="F:heme binding"/>
    <property type="evidence" value="ECO:0007669"/>
    <property type="project" value="InterPro"/>
</dbReference>
<dbReference type="GO" id="GO:0046872">
    <property type="term" value="F:metal ion binding"/>
    <property type="evidence" value="ECO:0007669"/>
    <property type="project" value="UniProtKB-KW"/>
</dbReference>
<dbReference type="GO" id="GO:0070301">
    <property type="term" value="P:cellular response to hydrogen peroxide"/>
    <property type="evidence" value="ECO:0007669"/>
    <property type="project" value="TreeGrafter"/>
</dbReference>
<dbReference type="GO" id="GO:0042744">
    <property type="term" value="P:hydrogen peroxide catabolic process"/>
    <property type="evidence" value="ECO:0007669"/>
    <property type="project" value="UniProtKB-KW"/>
</dbReference>
<dbReference type="CDD" id="cd08200">
    <property type="entry name" value="catalase_peroxidase_2"/>
    <property type="match status" value="1"/>
</dbReference>
<dbReference type="FunFam" id="1.10.420.10:FF:000002">
    <property type="entry name" value="Catalase-peroxidase"/>
    <property type="match status" value="1"/>
</dbReference>
<dbReference type="FunFam" id="1.10.420.10:FF:000004">
    <property type="entry name" value="Catalase-peroxidase"/>
    <property type="match status" value="1"/>
</dbReference>
<dbReference type="FunFam" id="1.10.520.10:FF:000002">
    <property type="entry name" value="Catalase-peroxidase"/>
    <property type="match status" value="1"/>
</dbReference>
<dbReference type="Gene3D" id="1.10.520.10">
    <property type="match status" value="2"/>
</dbReference>
<dbReference type="Gene3D" id="1.10.420.10">
    <property type="entry name" value="Peroxidase, domain 2"/>
    <property type="match status" value="2"/>
</dbReference>
<dbReference type="HAMAP" id="MF_01961">
    <property type="entry name" value="Catal_peroxid"/>
    <property type="match status" value="1"/>
</dbReference>
<dbReference type="InterPro" id="IPR000763">
    <property type="entry name" value="Catalase_peroxidase"/>
</dbReference>
<dbReference type="InterPro" id="IPR002016">
    <property type="entry name" value="Haem_peroxidase"/>
</dbReference>
<dbReference type="InterPro" id="IPR010255">
    <property type="entry name" value="Haem_peroxidase_sf"/>
</dbReference>
<dbReference type="InterPro" id="IPR019794">
    <property type="entry name" value="Peroxidases_AS"/>
</dbReference>
<dbReference type="InterPro" id="IPR019793">
    <property type="entry name" value="Peroxidases_heam-ligand_BS"/>
</dbReference>
<dbReference type="NCBIfam" id="TIGR00198">
    <property type="entry name" value="cat_per_HPI"/>
    <property type="match status" value="1"/>
</dbReference>
<dbReference type="NCBIfam" id="NF011635">
    <property type="entry name" value="PRK15061.1"/>
    <property type="match status" value="1"/>
</dbReference>
<dbReference type="PANTHER" id="PTHR30555:SF0">
    <property type="entry name" value="CATALASE-PEROXIDASE"/>
    <property type="match status" value="1"/>
</dbReference>
<dbReference type="PANTHER" id="PTHR30555">
    <property type="entry name" value="HYDROPEROXIDASE I, BIFUNCTIONAL CATALASE-PEROXIDASE"/>
    <property type="match status" value="1"/>
</dbReference>
<dbReference type="Pfam" id="PF00141">
    <property type="entry name" value="peroxidase"/>
    <property type="match status" value="2"/>
</dbReference>
<dbReference type="PRINTS" id="PR00460">
    <property type="entry name" value="BPEROXIDASE"/>
</dbReference>
<dbReference type="PRINTS" id="PR00458">
    <property type="entry name" value="PEROXIDASE"/>
</dbReference>
<dbReference type="SUPFAM" id="SSF48113">
    <property type="entry name" value="Heme-dependent peroxidases"/>
    <property type="match status" value="2"/>
</dbReference>
<dbReference type="PROSITE" id="PS00435">
    <property type="entry name" value="PEROXIDASE_1"/>
    <property type="match status" value="1"/>
</dbReference>
<dbReference type="PROSITE" id="PS00436">
    <property type="entry name" value="PEROXIDASE_2"/>
    <property type="match status" value="1"/>
</dbReference>
<dbReference type="PROSITE" id="PS50873">
    <property type="entry name" value="PEROXIDASE_4"/>
    <property type="match status" value="1"/>
</dbReference>
<accession>A9MI19</accession>
<gene>
    <name evidence="1" type="primary">katG</name>
    <name type="ordered locus">SARI_03550</name>
</gene>
<reference key="1">
    <citation type="submission" date="2007-11" db="EMBL/GenBank/DDBJ databases">
        <authorList>
            <consortium name="The Salmonella enterica serovar Arizonae Genome Sequencing Project"/>
            <person name="McClelland M."/>
            <person name="Sanderson E.K."/>
            <person name="Porwollik S."/>
            <person name="Spieth J."/>
            <person name="Clifton W.S."/>
            <person name="Fulton R."/>
            <person name="Chunyan W."/>
            <person name="Wollam A."/>
            <person name="Shah N."/>
            <person name="Pepin K."/>
            <person name="Bhonagiri V."/>
            <person name="Nash W."/>
            <person name="Johnson M."/>
            <person name="Thiruvilangam P."/>
            <person name="Wilson R."/>
        </authorList>
    </citation>
    <scope>NUCLEOTIDE SEQUENCE [LARGE SCALE GENOMIC DNA]</scope>
    <source>
        <strain>ATCC BAA-731 / CDC346-86 / RSK2980</strain>
    </source>
</reference>